<feature type="chain" id="PRO_0000388765" description="Uncharacterized protein MAL13P1.304">
    <location>
        <begin position="1"/>
        <end position="1792"/>
    </location>
</feature>
<feature type="region of interest" description="Disordered" evidence="1">
    <location>
        <begin position="1"/>
        <end position="34"/>
    </location>
</feature>
<feature type="region of interest" description="Disordered" evidence="1">
    <location>
        <begin position="162"/>
        <end position="187"/>
    </location>
</feature>
<feature type="region of interest" description="Disordered" evidence="1">
    <location>
        <begin position="440"/>
        <end position="461"/>
    </location>
</feature>
<feature type="region of interest" description="Disordered" evidence="1">
    <location>
        <begin position="544"/>
        <end position="568"/>
    </location>
</feature>
<feature type="region of interest" description="Disordered" evidence="1">
    <location>
        <begin position="736"/>
        <end position="777"/>
    </location>
</feature>
<feature type="region of interest" description="Disordered" evidence="1">
    <location>
        <begin position="837"/>
        <end position="979"/>
    </location>
</feature>
<feature type="region of interest" description="Disordered" evidence="1">
    <location>
        <begin position="1044"/>
        <end position="1071"/>
    </location>
</feature>
<feature type="region of interest" description="Disordered" evidence="1">
    <location>
        <begin position="1084"/>
        <end position="1106"/>
    </location>
</feature>
<feature type="region of interest" description="Disordered" evidence="1">
    <location>
        <begin position="1160"/>
        <end position="1215"/>
    </location>
</feature>
<feature type="region of interest" description="Disordered" evidence="1">
    <location>
        <begin position="1257"/>
        <end position="1290"/>
    </location>
</feature>
<feature type="region of interest" description="Disordered" evidence="1">
    <location>
        <begin position="1651"/>
        <end position="1686"/>
    </location>
</feature>
<feature type="region of interest" description="Disordered" evidence="1">
    <location>
        <begin position="1704"/>
        <end position="1731"/>
    </location>
</feature>
<feature type="region of interest" description="Disordered" evidence="1">
    <location>
        <begin position="1742"/>
        <end position="1761"/>
    </location>
</feature>
<feature type="compositionally biased region" description="Low complexity" evidence="1">
    <location>
        <begin position="1"/>
        <end position="28"/>
    </location>
</feature>
<feature type="compositionally biased region" description="Polar residues" evidence="1">
    <location>
        <begin position="169"/>
        <end position="182"/>
    </location>
</feature>
<feature type="compositionally biased region" description="Basic residues" evidence="1">
    <location>
        <begin position="550"/>
        <end position="559"/>
    </location>
</feature>
<feature type="compositionally biased region" description="Low complexity" evidence="1">
    <location>
        <begin position="741"/>
        <end position="776"/>
    </location>
</feature>
<feature type="compositionally biased region" description="Basic residues" evidence="1">
    <location>
        <begin position="838"/>
        <end position="847"/>
    </location>
</feature>
<feature type="compositionally biased region" description="Basic and acidic residues" evidence="1">
    <location>
        <begin position="856"/>
        <end position="873"/>
    </location>
</feature>
<feature type="compositionally biased region" description="Low complexity" evidence="1">
    <location>
        <begin position="874"/>
        <end position="924"/>
    </location>
</feature>
<feature type="compositionally biased region" description="Basic residues" evidence="1">
    <location>
        <begin position="943"/>
        <end position="954"/>
    </location>
</feature>
<feature type="compositionally biased region" description="Basic and acidic residues" evidence="1">
    <location>
        <begin position="955"/>
        <end position="966"/>
    </location>
</feature>
<feature type="compositionally biased region" description="Low complexity" evidence="1">
    <location>
        <begin position="1045"/>
        <end position="1057"/>
    </location>
</feature>
<feature type="compositionally biased region" description="Basic and acidic residues" evidence="1">
    <location>
        <begin position="1060"/>
        <end position="1071"/>
    </location>
</feature>
<feature type="compositionally biased region" description="Basic and acidic residues" evidence="1">
    <location>
        <begin position="1088"/>
        <end position="1106"/>
    </location>
</feature>
<feature type="compositionally biased region" description="Basic and acidic residues" evidence="1">
    <location>
        <begin position="1166"/>
        <end position="1192"/>
    </location>
</feature>
<feature type="compositionally biased region" description="Basic residues" evidence="1">
    <location>
        <begin position="1205"/>
        <end position="1215"/>
    </location>
</feature>
<feature type="compositionally biased region" description="Low complexity" evidence="1">
    <location>
        <begin position="1261"/>
        <end position="1289"/>
    </location>
</feature>
<feature type="compositionally biased region" description="Basic residues" evidence="1">
    <location>
        <begin position="1660"/>
        <end position="1686"/>
    </location>
</feature>
<feature type="compositionally biased region" description="Basic residues" evidence="1">
    <location>
        <begin position="1704"/>
        <end position="1717"/>
    </location>
</feature>
<sequence length="1792" mass="210164">MNNNNNNNNNSNNNNNSNNNNNGNSNNNFFSGKGNALSAYQNKILNIKSNNNNAHHFVNKNVPTYSPPNIIMANKKGGNFNNTSGNIINRYNVENNNHRNTYHPSNNNTRNSVNFLNKNILYGNNNNNNNNNNNINITNISNNNNNINITNISNNNNNINITNISNNNKQPISSNQHPYQQKQSHHHNNSINYNEYMDEKNMNTSQSIFKNMTIQRNSQQFNTSDFVNNINIMNAPHINEHSNIYKRNSLNIVNNAHIISNNMNIQSNRNSNISFPQNMNANIGGLKNSNHNLNNIEMKYNTLNNNMNSINKNTNITNVGTLNIQMKNNPMNVNINQNNYNTDFYVNENKVNSKNKENNNNHINIEKMNYIKSNVYLDNTLVQVNSNNNYNMDKNILNNNNNTYIINDKKNSTVNNNITNMDNNLVPGVMSSMNIPDDIKKRKKKERKKNENIYNNRNKSSINTEEHNNNIIDVANQNSEHFLQNNKQYGNITNIQNNNLSHDMNNYSINNSTTSDVIGIVELYKNSLSSKAVNKKKSKLIKDVIDDNKKRNKKEKKKTIPNNDSIINDMNKNKNVELLNETQIFDNKNYDKNNDIHNNIYNSNDNNLIHNKNNVNNDHTNIKEANNNNNRKSEHSEKNKDVHNYYYANNYQCITDEKNNKQYILWNNRTIEVTFVWLFITKEFNENRKKYTAFLPYLKHFYPNRLKDLIEQLEKYSLLKFNYIMHSSYNMQEEYNKNKEPNNINSNDNNNKNDDNNNNNNKNVDGNNNNNNNINSNDKEVLMNGMLLSDKSTLNSNKQIDNTLINNINSGFNNIIKNMSIDDNTIRSIMDNIENITKGKKKGRKKKQTLENNGDNIKEDIKSSKKDKKKDNINDNNNDNNNDNNNDNNNDNNNDNNNDNNNDNNNNNNNNNNNNNNNNNNNHNNHNDNKNNQGDSKNEQEKKKKTRQYRKKSKITNDDNNEKIKQDNINSNNPKNDLKNNEIICSEEKNMKEDNIPDDTHYKEKRRNTFNLFNLDEGTINMDLFNLSLLENDDALNKKENDMVSKSNIPSSFSSPPKETNNKNDIDKEQSDKHNNVQEFQNLNMNNEKSKDLYFNKNDIDNNDNKDKIINETSSGTFMQNLKETFYEKTKAMFSNLLSDTKISKDDELNNEVDQNCVKTSSGILNKEENNKKEDDEKHFDDNTNEQKKNVDNGEYNEMTAEPGRKKRKKDVLERKKKNLNKEIIKSEKRIRKYRTKKMLLKEAMEKGISNNIVESNITANNNNDNNKNNDNDNNNNNNDNIINNNNNNGDMFSNSYDNSYIKENKYNKKLCFPQNNLLSDFRSEPIIIQQDKRKIIKINTINKIKRKYKKFRFCINKVFKKKSINDIIALNENIHKNKDLLTLFKKKDLANLKKKNLSFFMDTLKLEKIDMLIMKRIQMCLEKIKNTLLLTCTINNVQEIVNILKKAFEKRLYLMWPLIEFSNKYRLDQYFHLLGKNKNHINSSFKDTKLFVHQNISSLILYFNQRSMDDKWVEYLKSQMKPKRRRRKTKMKEQFLEDKPIDYLNTMNSQHSNNFIGENFSEIETVESKANEYAFVGYNQKRLLTQITPYDYRVVLNSNFCNKFFTPNWREQQSIFIDNLHFDMVPDTDEIKKHFENVYIRYMEYDEEKLRSKSDTKSKEHKKKDKKYKMLFKKKEGKGKPGRKKKIKLEIENVSNEIKIKKPRKKYERVKPRKSKNAMMNEEKSGNSEKQINNVLNVTNIENKHKSKKGRKPKESNLNNLNINEDINVAKASPDTLHRASLEFMNPNLFT</sequence>
<gene>
    <name type="ORF">MAL13P1.304</name>
</gene>
<evidence type="ECO:0000256" key="1">
    <source>
        <dbReference type="SAM" id="MobiDB-lite"/>
    </source>
</evidence>
<evidence type="ECO:0000269" key="2">
    <source>
    </source>
</evidence>
<evidence type="ECO:0000305" key="3"/>
<proteinExistence type="evidence at protein level"/>
<dbReference type="EMBL" id="AL844509">
    <property type="protein sequence ID" value="CAD52732.1"/>
    <property type="molecule type" value="Genomic_DNA"/>
</dbReference>
<dbReference type="RefSeq" id="XP_001350323.1">
    <property type="nucleotide sequence ID" value="XM_001350287.1"/>
</dbReference>
<dbReference type="BioGRID" id="1209133">
    <property type="interactions" value="7"/>
</dbReference>
<dbReference type="FunCoup" id="Q8ID94">
    <property type="interactions" value="285"/>
</dbReference>
<dbReference type="IntAct" id="Q8ID94">
    <property type="interactions" value="6"/>
</dbReference>
<dbReference type="STRING" id="36329.Q8ID94"/>
<dbReference type="PaxDb" id="5833-MAL13P1.304"/>
<dbReference type="EnsemblProtists" id="CAD52732">
    <property type="protein sequence ID" value="CAD52732"/>
    <property type="gene ID" value="PF3D7_1361200"/>
</dbReference>
<dbReference type="KEGG" id="pfa:PF3D7_1361200"/>
<dbReference type="VEuPathDB" id="PlasmoDB:PF3D7_1361200"/>
<dbReference type="HOGENOM" id="CLU_242320_0_0_1"/>
<dbReference type="InParanoid" id="Q8ID94"/>
<dbReference type="OMA" id="CVINNVE"/>
<dbReference type="OrthoDB" id="372950at2759"/>
<dbReference type="Proteomes" id="UP000001450">
    <property type="component" value="Chromosome 13"/>
</dbReference>
<dbReference type="GO" id="GO:0005634">
    <property type="term" value="C:nucleus"/>
    <property type="evidence" value="ECO:0000303"/>
    <property type="project" value="UniProtKB"/>
</dbReference>
<comment type="biotechnology">
    <text evidence="2">Possible candidate for an effective malaria vaccine as determined by epitope response in sera.</text>
</comment>
<reference key="1">
    <citation type="journal article" date="2002" name="Nature">
        <title>Genome sequence of the human malaria parasite Plasmodium falciparum.</title>
        <authorList>
            <person name="Gardner M.J."/>
            <person name="Hall N."/>
            <person name="Fung E."/>
            <person name="White O."/>
            <person name="Berriman M."/>
            <person name="Hyman R.W."/>
            <person name="Carlton J.M."/>
            <person name="Pain A."/>
            <person name="Nelson K.E."/>
            <person name="Bowman S."/>
            <person name="Paulsen I.T."/>
            <person name="James K.D."/>
            <person name="Eisen J.A."/>
            <person name="Rutherford K.M."/>
            <person name="Salzberg S.L."/>
            <person name="Craig A."/>
            <person name="Kyes S."/>
            <person name="Chan M.-S."/>
            <person name="Nene V."/>
            <person name="Shallom S.J."/>
            <person name="Suh B."/>
            <person name="Peterson J."/>
            <person name="Angiuoli S."/>
            <person name="Pertea M."/>
            <person name="Allen J."/>
            <person name="Selengut J."/>
            <person name="Haft D."/>
            <person name="Mather M.W."/>
            <person name="Vaidya A.B."/>
            <person name="Martin D.M.A."/>
            <person name="Fairlamb A.H."/>
            <person name="Fraunholz M.J."/>
            <person name="Roos D.S."/>
            <person name="Ralph S.A."/>
            <person name="McFadden G.I."/>
            <person name="Cummings L.M."/>
            <person name="Subramanian G.M."/>
            <person name="Mungall C."/>
            <person name="Venter J.C."/>
            <person name="Carucci D.J."/>
            <person name="Hoffman S.L."/>
            <person name="Newbold C."/>
            <person name="Davis R.W."/>
            <person name="Fraser C.M."/>
            <person name="Barrell B.G."/>
        </authorList>
    </citation>
    <scope>NUCLEOTIDE SEQUENCE [LARGE SCALE GENOMIC DNA]</scope>
    <source>
        <strain>3D7</strain>
    </source>
</reference>
<reference key="2">
    <citation type="journal article" date="2002" name="Nature">
        <title>Sequence of Plasmodium falciparum chromosomes 1, 3-9 and 13.</title>
        <authorList>
            <person name="Hall N."/>
            <person name="Pain A."/>
            <person name="Berriman M."/>
            <person name="Churcher C.M."/>
            <person name="Harris B."/>
            <person name="Harris D."/>
            <person name="Mungall K.L."/>
            <person name="Bowman S."/>
            <person name="Atkin R."/>
            <person name="Baker S."/>
            <person name="Barron A."/>
            <person name="Brooks K."/>
            <person name="Buckee C.O."/>
            <person name="Burrows C."/>
            <person name="Cherevach I."/>
            <person name="Chillingworth C."/>
            <person name="Chillingworth T."/>
            <person name="Christodoulou Z."/>
            <person name="Clark L."/>
            <person name="Clark R."/>
            <person name="Corton C."/>
            <person name="Cronin A."/>
            <person name="Davies R.M."/>
            <person name="Davis P."/>
            <person name="Dear P."/>
            <person name="Dearden F."/>
            <person name="Doggett J."/>
            <person name="Feltwell T."/>
            <person name="Goble A."/>
            <person name="Goodhead I."/>
            <person name="Gwilliam R."/>
            <person name="Hamlin N."/>
            <person name="Hance Z."/>
            <person name="Harper D."/>
            <person name="Hauser H."/>
            <person name="Hornsby T."/>
            <person name="Holroyd S."/>
            <person name="Horrocks P."/>
            <person name="Humphray S."/>
            <person name="Jagels K."/>
            <person name="James K.D."/>
            <person name="Johnson D."/>
            <person name="Kerhornou A."/>
            <person name="Knights A."/>
            <person name="Konfortov B."/>
            <person name="Kyes S."/>
            <person name="Larke N."/>
            <person name="Lawson D."/>
            <person name="Lennard N."/>
            <person name="Line A."/>
            <person name="Maddison M."/>
            <person name="Mclean J."/>
            <person name="Mooney P."/>
            <person name="Moule S."/>
            <person name="Murphy L."/>
            <person name="Oliver K."/>
            <person name="Ormond D."/>
            <person name="Price C."/>
            <person name="Quail M.A."/>
            <person name="Rabbinowitsch E."/>
            <person name="Rajandream M.A."/>
            <person name="Rutter S."/>
            <person name="Rutherford K.M."/>
            <person name="Sanders M."/>
            <person name="Simmonds M."/>
            <person name="Seeger K."/>
            <person name="Sharp S."/>
            <person name="Smith R."/>
            <person name="Squares R."/>
            <person name="Squares S."/>
            <person name="Stevens K."/>
            <person name="Taylor K."/>
            <person name="Tivey A."/>
            <person name="Unwin L."/>
            <person name="Whitehead S."/>
            <person name="Woodward J.R."/>
            <person name="Sulston J.E."/>
            <person name="Craig A."/>
            <person name="Newbold C."/>
            <person name="Barrell B.G."/>
        </authorList>
    </citation>
    <scope>NUCLEOTIDE SEQUENCE [LARGE SCALE GENOMIC DNA]</scope>
    <source>
        <strain>3D7</strain>
    </source>
</reference>
<reference evidence="3" key="3">
    <citation type="journal article" date="2007" name="PLoS ONE">
        <title>Rapid identification of malaria vaccine candidates based on alpha-helical coiled coil protein motif.</title>
        <authorList>
            <person name="Villard V."/>
            <person name="Agak G.W."/>
            <person name="Frank G."/>
            <person name="Jafarshad A."/>
            <person name="Servis C."/>
            <person name="Nebie I."/>
            <person name="Sirima S.B."/>
            <person name="Felger I."/>
            <person name="Arevalo-Herrera M."/>
            <person name="Herrera S."/>
            <person name="Heitz F."/>
            <person name="Baecker V."/>
            <person name="Druilhe P."/>
            <person name="Kajava A.V."/>
            <person name="Corradin G."/>
        </authorList>
    </citation>
    <scope>SYNTHESIS OF 284-312</scope>
    <scope>POSSIBLE CANDIDATE MALARIA EPITOPE</scope>
</reference>
<accession>Q8ID94</accession>
<protein>
    <recommendedName>
        <fullName>Uncharacterized protein MAL13P1.304</fullName>
    </recommendedName>
</protein>
<organism>
    <name type="scientific">Plasmodium falciparum (isolate 3D7)</name>
    <dbReference type="NCBI Taxonomy" id="36329"/>
    <lineage>
        <taxon>Eukaryota</taxon>
        <taxon>Sar</taxon>
        <taxon>Alveolata</taxon>
        <taxon>Apicomplexa</taxon>
        <taxon>Aconoidasida</taxon>
        <taxon>Haemosporida</taxon>
        <taxon>Plasmodiidae</taxon>
        <taxon>Plasmodium</taxon>
        <taxon>Plasmodium (Laverania)</taxon>
    </lineage>
</organism>
<name>YPF12_PLAF7</name>
<keyword id="KW-0477">Merozoite</keyword>
<keyword id="KW-1185">Reference proteome</keyword>